<name>ASPA_PARMW</name>
<feature type="chain" id="PRO_0000216881" description="Probable aspartoacylase">
    <location>
        <begin position="1"/>
        <end position="303"/>
    </location>
</feature>
<feature type="binding site" evidence="1">
    <location>
        <position position="13"/>
    </location>
    <ligand>
        <name>Zn(2+)</name>
        <dbReference type="ChEBI" id="CHEBI:29105"/>
    </ligand>
</feature>
<feature type="binding site" evidence="1">
    <location>
        <position position="16"/>
    </location>
    <ligand>
        <name>Zn(2+)</name>
        <dbReference type="ChEBI" id="CHEBI:29105"/>
    </ligand>
</feature>
<feature type="binding site" evidence="1">
    <location>
        <position position="55"/>
    </location>
    <ligand>
        <name>substrate</name>
    </ligand>
</feature>
<feature type="binding site" evidence="1">
    <location>
        <begin position="62"/>
        <end position="63"/>
    </location>
    <ligand>
        <name>substrate</name>
    </ligand>
</feature>
<feature type="binding site" evidence="1">
    <location>
        <position position="104"/>
    </location>
    <ligand>
        <name>Zn(2+)</name>
        <dbReference type="ChEBI" id="CHEBI:29105"/>
    </ligand>
</feature>
<feature type="binding site" evidence="1">
    <location>
        <position position="162"/>
    </location>
    <ligand>
        <name>substrate</name>
    </ligand>
</feature>
<feature type="binding site" evidence="1">
    <location>
        <position position="273"/>
    </location>
    <ligand>
        <name>substrate</name>
    </ligand>
</feature>
<reference key="1">
    <citation type="journal article" date="2003" name="Nature">
        <title>The genome of a motile marine Synechococcus.</title>
        <authorList>
            <person name="Palenik B."/>
            <person name="Brahamsha B."/>
            <person name="Larimer F.W."/>
            <person name="Land M.L."/>
            <person name="Hauser L."/>
            <person name="Chain P."/>
            <person name="Lamerdin J.E."/>
            <person name="Regala W."/>
            <person name="Allen E.E."/>
            <person name="McCarren J."/>
            <person name="Paulsen I.T."/>
            <person name="Dufresne A."/>
            <person name="Partensky F."/>
            <person name="Webb E.A."/>
            <person name="Waterbury J."/>
        </authorList>
    </citation>
    <scope>NUCLEOTIDE SEQUENCE [LARGE SCALE GENOMIC DNA]</scope>
    <source>
        <strain>WH8102</strain>
    </source>
</reference>
<proteinExistence type="inferred from homology"/>
<comment type="catalytic activity">
    <reaction evidence="1">
        <text>an N-acyl-L-aspartate + H2O = a carboxylate + L-aspartate</text>
        <dbReference type="Rhea" id="RHEA:10872"/>
        <dbReference type="ChEBI" id="CHEBI:15377"/>
        <dbReference type="ChEBI" id="CHEBI:29067"/>
        <dbReference type="ChEBI" id="CHEBI:29991"/>
        <dbReference type="ChEBI" id="CHEBI:58497"/>
        <dbReference type="EC" id="3.5.1.15"/>
    </reaction>
</comment>
<comment type="cofactor">
    <cofactor evidence="1">
        <name>Zn(2+)</name>
        <dbReference type="ChEBI" id="CHEBI:29105"/>
    </cofactor>
    <text evidence="1">Binds 1 zinc ion per subunit.</text>
</comment>
<comment type="similarity">
    <text evidence="1">Belongs to the AspA/AstE family. Aspartoacylase subfamily.</text>
</comment>
<keyword id="KW-0378">Hydrolase</keyword>
<keyword id="KW-0479">Metal-binding</keyword>
<keyword id="KW-0862">Zinc</keyword>
<gene>
    <name type="ordered locus">SYNW1922</name>
</gene>
<evidence type="ECO:0000255" key="1">
    <source>
        <dbReference type="HAMAP-Rule" id="MF_00704"/>
    </source>
</evidence>
<organism>
    <name type="scientific">Parasynechococcus marenigrum (strain WH8102)</name>
    <dbReference type="NCBI Taxonomy" id="84588"/>
    <lineage>
        <taxon>Bacteria</taxon>
        <taxon>Bacillati</taxon>
        <taxon>Cyanobacteriota</taxon>
        <taxon>Cyanophyceae</taxon>
        <taxon>Synechococcales</taxon>
        <taxon>Prochlorococcaceae</taxon>
        <taxon>Parasynechococcus</taxon>
        <taxon>Parasynechococcus marenigrum</taxon>
    </lineage>
</organism>
<sequence length="303" mass="33137">MTRCDVLVVGGTHGNEINGAWLVDQWRDQHDLLDAAGLSLALEIGNPEARTANRRYVDRDLNRCFTADLLNQGGQEQELQRARQLLAWHGPDGATPCRVALDLHSTTAAMGSCLVVYGRRPADLALAARVQGALGLPIYLHEADAAQTGFLVEQWPCGLVIEVGPVPQGVLDALVVRQTRIALETCCQELAAARAGTGRDPHNLVVHRHLGSVDLPRDQRDCAAAMVHPQLQGQDWRPLMDGAAMFELPRGGTVPLQADEGETWPLFINEAAYAEKRIAFSLTRREVWPIDPSWGQALEQLMG</sequence>
<protein>
    <recommendedName>
        <fullName evidence="1">Probable aspartoacylase</fullName>
        <ecNumber evidence="1">3.5.1.15</ecNumber>
    </recommendedName>
</protein>
<dbReference type="EC" id="3.5.1.15" evidence="1"/>
<dbReference type="EMBL" id="BX569694">
    <property type="protein sequence ID" value="CAE08437.1"/>
    <property type="molecule type" value="Genomic_DNA"/>
</dbReference>
<dbReference type="RefSeq" id="WP_011128780.1">
    <property type="nucleotide sequence ID" value="NC_005070.1"/>
</dbReference>
<dbReference type="SMR" id="P59829"/>
<dbReference type="STRING" id="84588.SYNW1922"/>
<dbReference type="KEGG" id="syw:SYNW1922"/>
<dbReference type="eggNOG" id="COG2988">
    <property type="taxonomic scope" value="Bacteria"/>
</dbReference>
<dbReference type="HOGENOM" id="CLU_083292_0_0_3"/>
<dbReference type="Proteomes" id="UP000001422">
    <property type="component" value="Chromosome"/>
</dbReference>
<dbReference type="GO" id="GO:0005829">
    <property type="term" value="C:cytosol"/>
    <property type="evidence" value="ECO:0007669"/>
    <property type="project" value="TreeGrafter"/>
</dbReference>
<dbReference type="GO" id="GO:0019807">
    <property type="term" value="F:aspartoacylase activity"/>
    <property type="evidence" value="ECO:0007669"/>
    <property type="project" value="UniProtKB-UniRule"/>
</dbReference>
<dbReference type="GO" id="GO:0016788">
    <property type="term" value="F:hydrolase activity, acting on ester bonds"/>
    <property type="evidence" value="ECO:0007669"/>
    <property type="project" value="InterPro"/>
</dbReference>
<dbReference type="GO" id="GO:0008270">
    <property type="term" value="F:zinc ion binding"/>
    <property type="evidence" value="ECO:0007669"/>
    <property type="project" value="UniProtKB-UniRule"/>
</dbReference>
<dbReference type="CDD" id="cd06909">
    <property type="entry name" value="M14_ASPA"/>
    <property type="match status" value="1"/>
</dbReference>
<dbReference type="Gene3D" id="2.20.25.160">
    <property type="match status" value="1"/>
</dbReference>
<dbReference type="Gene3D" id="3.40.630.10">
    <property type="entry name" value="Zn peptidases"/>
    <property type="match status" value="1"/>
</dbReference>
<dbReference type="HAMAP" id="MF_00704">
    <property type="entry name" value="Aspartoacylase"/>
    <property type="match status" value="1"/>
</dbReference>
<dbReference type="InterPro" id="IPR050178">
    <property type="entry name" value="AspA/AstE_fam"/>
</dbReference>
<dbReference type="InterPro" id="IPR016708">
    <property type="entry name" value="Aspartoacylase"/>
</dbReference>
<dbReference type="InterPro" id="IPR055438">
    <property type="entry name" value="AstE_AspA_cat"/>
</dbReference>
<dbReference type="InterPro" id="IPR007036">
    <property type="entry name" value="Aste_AspA_hybrid_dom"/>
</dbReference>
<dbReference type="NCBIfam" id="NF002601">
    <property type="entry name" value="PRK02259.1"/>
    <property type="match status" value="1"/>
</dbReference>
<dbReference type="PANTHER" id="PTHR15162">
    <property type="entry name" value="ASPARTOACYLASE"/>
    <property type="match status" value="1"/>
</dbReference>
<dbReference type="PANTHER" id="PTHR15162:SF7">
    <property type="entry name" value="SUCCINYLGLUTAMATE DESUCCINYLASE"/>
    <property type="match status" value="1"/>
</dbReference>
<dbReference type="Pfam" id="PF24827">
    <property type="entry name" value="AstE_AspA_cat"/>
    <property type="match status" value="1"/>
</dbReference>
<dbReference type="Pfam" id="PF04952">
    <property type="entry name" value="AstE_AspA_hybrid"/>
    <property type="match status" value="1"/>
</dbReference>
<dbReference type="PIRSF" id="PIRSF018001">
    <property type="entry name" value="Aspartoacylase"/>
    <property type="match status" value="1"/>
</dbReference>
<dbReference type="SUPFAM" id="SSF53187">
    <property type="entry name" value="Zn-dependent exopeptidases"/>
    <property type="match status" value="1"/>
</dbReference>
<accession>P59829</accession>